<keyword id="KW-0687">Ribonucleoprotein</keyword>
<keyword id="KW-0689">Ribosomal protein</keyword>
<accession>Q0SMF9</accession>
<accession>G0IRE9</accession>
<protein>
    <recommendedName>
        <fullName evidence="1">Small ribosomal subunit protein bS16</fullName>
    </recommendedName>
    <alternativeName>
        <fullName evidence="2">30S ribosomal protein S16</fullName>
    </alternativeName>
</protein>
<reference key="1">
    <citation type="journal article" date="2006" name="BMC Genomics">
        <title>Comparative genome analysis: selection pressure on the Borrelia vls cassettes is essential for infectivity.</title>
        <authorList>
            <person name="Gloeckner G."/>
            <person name="Schulte-Spechtel U."/>
            <person name="Schilhabel M."/>
            <person name="Felder M."/>
            <person name="Suehnel J."/>
            <person name="Wilske B."/>
            <person name="Platzer M."/>
        </authorList>
    </citation>
    <scope>NUCLEOTIDE SEQUENCE [LARGE SCALE GENOMIC DNA]</scope>
    <source>
        <strain>PKo</strain>
    </source>
</reference>
<reference key="2">
    <citation type="journal article" date="2011" name="J. Bacteriol.">
        <title>Whole-genome sequences of two Borrelia afzelii and two Borrelia garinii Lyme disease agent isolates.</title>
        <authorList>
            <person name="Casjens S.R."/>
            <person name="Mongodin E.F."/>
            <person name="Qiu W.G."/>
            <person name="Dunn J.J."/>
            <person name="Luft B.J."/>
            <person name="Fraser-Liggett C.M."/>
            <person name="Schutzer S.E."/>
        </authorList>
    </citation>
    <scope>NUCLEOTIDE SEQUENCE [LARGE SCALE GENOMIC DNA]</scope>
    <source>
        <strain>PKo</strain>
    </source>
</reference>
<evidence type="ECO:0000255" key="1">
    <source>
        <dbReference type="HAMAP-Rule" id="MF_00385"/>
    </source>
</evidence>
<evidence type="ECO:0000305" key="2"/>
<feature type="chain" id="PRO_1000049218" description="Small ribosomal subunit protein bS16">
    <location>
        <begin position="1"/>
        <end position="86"/>
    </location>
</feature>
<feature type="sequence conflict" description="In Ref. 2; AEL69915." evidence="2" ref="2">
    <original>L</original>
    <variation>P</variation>
    <location>
        <position position="42"/>
    </location>
</feature>
<feature type="sequence conflict" description="In Ref. 2; AEL69915." evidence="2" ref="2">
    <original>L</original>
    <variation>I</variation>
    <location>
        <position position="49"/>
    </location>
</feature>
<comment type="similarity">
    <text evidence="1">Belongs to the bacterial ribosomal protein bS16 family.</text>
</comment>
<comment type="sequence caution" evidence="2">
    <conflict type="erroneous initiation">
        <sequence resource="EMBL-CDS" id="AEL69915"/>
    </conflict>
    <text>Truncated N-terminus.</text>
</comment>
<sequence>MSVKIRLKRMGAKKRPYYRIVVMNSTSPRDGRAIEELGYYHLIEKQNQLKIKEDRMKDWISKGAILSDTVKMLLKKNNLNAKSQEV</sequence>
<proteinExistence type="inferred from homology"/>
<dbReference type="EMBL" id="CP000395">
    <property type="protein sequence ID" value="ABH01969.1"/>
    <property type="molecule type" value="Genomic_DNA"/>
</dbReference>
<dbReference type="EMBL" id="CP002933">
    <property type="protein sequence ID" value="AEL69915.1"/>
    <property type="status" value="ALT_INIT"/>
    <property type="molecule type" value="Genomic_DNA"/>
</dbReference>
<dbReference type="RefSeq" id="WP_011601174.1">
    <property type="nucleotide sequence ID" value="NC_008277.1"/>
</dbReference>
<dbReference type="SMR" id="Q0SMF9"/>
<dbReference type="STRING" id="29518.BLA32_00760"/>
<dbReference type="KEGG" id="baf:BAPKO_0739"/>
<dbReference type="KEGG" id="bafz:BafPKo_0720"/>
<dbReference type="PATRIC" id="fig|390236.22.peg.687"/>
<dbReference type="eggNOG" id="COG0228">
    <property type="taxonomic scope" value="Bacteria"/>
</dbReference>
<dbReference type="HOGENOM" id="CLU_100590_5_0_12"/>
<dbReference type="OrthoDB" id="9807878at2"/>
<dbReference type="Proteomes" id="UP000005216">
    <property type="component" value="Chromosome"/>
</dbReference>
<dbReference type="GO" id="GO:0005737">
    <property type="term" value="C:cytoplasm"/>
    <property type="evidence" value="ECO:0007669"/>
    <property type="project" value="UniProtKB-ARBA"/>
</dbReference>
<dbReference type="GO" id="GO:0015935">
    <property type="term" value="C:small ribosomal subunit"/>
    <property type="evidence" value="ECO:0007669"/>
    <property type="project" value="TreeGrafter"/>
</dbReference>
<dbReference type="GO" id="GO:0003735">
    <property type="term" value="F:structural constituent of ribosome"/>
    <property type="evidence" value="ECO:0007669"/>
    <property type="project" value="InterPro"/>
</dbReference>
<dbReference type="GO" id="GO:0006412">
    <property type="term" value="P:translation"/>
    <property type="evidence" value="ECO:0007669"/>
    <property type="project" value="UniProtKB-UniRule"/>
</dbReference>
<dbReference type="Gene3D" id="3.30.1320.10">
    <property type="match status" value="1"/>
</dbReference>
<dbReference type="HAMAP" id="MF_00385">
    <property type="entry name" value="Ribosomal_bS16"/>
    <property type="match status" value="1"/>
</dbReference>
<dbReference type="InterPro" id="IPR000307">
    <property type="entry name" value="Ribosomal_bS16"/>
</dbReference>
<dbReference type="InterPro" id="IPR020592">
    <property type="entry name" value="Ribosomal_bS16_CS"/>
</dbReference>
<dbReference type="InterPro" id="IPR023803">
    <property type="entry name" value="Ribosomal_bS16_dom_sf"/>
</dbReference>
<dbReference type="NCBIfam" id="TIGR00002">
    <property type="entry name" value="S16"/>
    <property type="match status" value="1"/>
</dbReference>
<dbReference type="PANTHER" id="PTHR12919">
    <property type="entry name" value="30S RIBOSOMAL PROTEIN S16"/>
    <property type="match status" value="1"/>
</dbReference>
<dbReference type="PANTHER" id="PTHR12919:SF20">
    <property type="entry name" value="SMALL RIBOSOMAL SUBUNIT PROTEIN BS16M"/>
    <property type="match status" value="1"/>
</dbReference>
<dbReference type="Pfam" id="PF00886">
    <property type="entry name" value="Ribosomal_S16"/>
    <property type="match status" value="1"/>
</dbReference>
<dbReference type="SUPFAM" id="SSF54565">
    <property type="entry name" value="Ribosomal protein S16"/>
    <property type="match status" value="1"/>
</dbReference>
<dbReference type="PROSITE" id="PS00732">
    <property type="entry name" value="RIBOSOMAL_S16"/>
    <property type="match status" value="1"/>
</dbReference>
<gene>
    <name evidence="1" type="primary">rpsP</name>
    <name type="ordered locus">BAPKO_0739</name>
    <name type="ordered locus">BafPKo_0720</name>
</gene>
<name>RS16_BORAP</name>
<organism>
    <name type="scientific">Borreliella afzelii (strain PKo)</name>
    <name type="common">Borrelia afzelii</name>
    <dbReference type="NCBI Taxonomy" id="390236"/>
    <lineage>
        <taxon>Bacteria</taxon>
        <taxon>Pseudomonadati</taxon>
        <taxon>Spirochaetota</taxon>
        <taxon>Spirochaetia</taxon>
        <taxon>Spirochaetales</taxon>
        <taxon>Borreliaceae</taxon>
        <taxon>Borreliella</taxon>
    </lineage>
</organism>